<evidence type="ECO:0000255" key="1">
    <source>
        <dbReference type="HAMAP-Rule" id="MF_01545"/>
    </source>
</evidence>
<sequence length="652" mass="72897">MQWHRLRFPIKLTFAIVLSLLIGFHFNLETPRWAVMTACIVAGGTAFAAGGDPFSGALRHRGMLRIIGTFLGCIAALTIMIATIRAPALMMLLCCMWAGLCVWLSSLIKIENSYALGLAGYTALIIVVSVDANGSVLLAPQFAVERCSEIIIGIVCAILADMLFSPRSVKQDIDREIDALLVDQYKLMQLCVAHGDKEEVDRLWTNLVRRTTALNGMRGNLMMESSRWQKIDERMRALNTLSLALITQAAETYLIQDSRKEYVPPQFHIFFDKSVENIGDIHKRMKIMRRVITTSGSKNTPVTLQNWVVAATRYLLLLKGIHTNSSISRIEREVLKDEPVVKMRSAESRHAMINGIRTFVATAVGSLFWLWTGWASGSGAMVMLAVITALAMRMPNPLMMAKDFLYGMIVAIPLGSLYYMVIMPSTQQSMLLLCISLGVMAFIGGILIQRRQIGTLGGLVGTINIITLDNPMTFNVTAFLDNALGQAIGCFLALLVILLIRDTSKARTGRILLNRFMYAAVAAMSTNQARRRENHLPALYHQLFMLLNIFPGDIDKFRIALTLIIGHQRLRDADIPVNEDLSAYHKQLRHTADQVIAARTDAKRHRYFEQLLAELDTYQGKLVHYDAPLNVTEPVKRLANTLKKYQNTLIQI</sequence>
<gene>
    <name evidence="1" type="primary">aaeB</name>
    <name type="ordered locus">EbC_40630</name>
</gene>
<dbReference type="EMBL" id="FP236843">
    <property type="protein sequence ID" value="CAX61594.1"/>
    <property type="molecule type" value="Genomic_DNA"/>
</dbReference>
<dbReference type="RefSeq" id="WP_013204077.1">
    <property type="nucleotide sequence ID" value="NC_014306.1"/>
</dbReference>
<dbReference type="SMR" id="D8MXN7"/>
<dbReference type="STRING" id="634500.EbC_40630"/>
<dbReference type="GeneID" id="90514001"/>
<dbReference type="KEGG" id="ebi:EbC_40630"/>
<dbReference type="eggNOG" id="COG1289">
    <property type="taxonomic scope" value="Bacteria"/>
</dbReference>
<dbReference type="HOGENOM" id="CLU_027647_0_0_6"/>
<dbReference type="Proteomes" id="UP000008793">
    <property type="component" value="Chromosome"/>
</dbReference>
<dbReference type="GO" id="GO:0005886">
    <property type="term" value="C:plasma membrane"/>
    <property type="evidence" value="ECO:0007669"/>
    <property type="project" value="UniProtKB-SubCell"/>
</dbReference>
<dbReference type="GO" id="GO:0022857">
    <property type="term" value="F:transmembrane transporter activity"/>
    <property type="evidence" value="ECO:0007669"/>
    <property type="project" value="UniProtKB-UniRule"/>
</dbReference>
<dbReference type="GO" id="GO:0046942">
    <property type="term" value="P:carboxylic acid transport"/>
    <property type="evidence" value="ECO:0007669"/>
    <property type="project" value="InterPro"/>
</dbReference>
<dbReference type="HAMAP" id="MF_01545">
    <property type="entry name" value="AaeB"/>
    <property type="match status" value="1"/>
</dbReference>
<dbReference type="InterPro" id="IPR006726">
    <property type="entry name" value="PHBA_efflux_AaeB/fusaric-R"/>
</dbReference>
<dbReference type="InterPro" id="IPR023706">
    <property type="entry name" value="PHBA_efflux_pump_AaeB"/>
</dbReference>
<dbReference type="NCBIfam" id="NF007916">
    <property type="entry name" value="PRK10631.1"/>
    <property type="match status" value="1"/>
</dbReference>
<dbReference type="PANTHER" id="PTHR30509:SF9">
    <property type="entry name" value="MULTIDRUG RESISTANCE PROTEIN MDTO"/>
    <property type="match status" value="1"/>
</dbReference>
<dbReference type="PANTHER" id="PTHR30509">
    <property type="entry name" value="P-HYDROXYBENZOIC ACID EFFLUX PUMP SUBUNIT-RELATED"/>
    <property type="match status" value="1"/>
</dbReference>
<dbReference type="Pfam" id="PF04632">
    <property type="entry name" value="FUSC"/>
    <property type="match status" value="1"/>
</dbReference>
<accession>D8MXN7</accession>
<reference key="1">
    <citation type="journal article" date="2010" name="BMC Genomics">
        <title>Genome comparison of the epiphytic bacteria Erwinia billingiae and E. tasmaniensis with the pear pathogen E. pyrifoliae.</title>
        <authorList>
            <person name="Kube M."/>
            <person name="Migdoll A.M."/>
            <person name="Gehring I."/>
            <person name="Heitmann K."/>
            <person name="Mayer Y."/>
            <person name="Kuhl H."/>
            <person name="Knaust F."/>
            <person name="Geider K."/>
            <person name="Reinhardt R."/>
        </authorList>
    </citation>
    <scope>NUCLEOTIDE SEQUENCE [LARGE SCALE GENOMIC DNA]</scope>
    <source>
        <strain>Eb661</strain>
    </source>
</reference>
<comment type="function">
    <text evidence="1">Forms an efflux pump with AaeA. Could function as a metabolic relief valve, allowing to eliminate certain compounds when they accumulate to high levels in the cell.</text>
</comment>
<comment type="subcellular location">
    <subcellularLocation>
        <location evidence="1">Cell inner membrane</location>
        <topology evidence="1">Multi-pass membrane protein</topology>
    </subcellularLocation>
</comment>
<comment type="similarity">
    <text evidence="1">Belongs to the aromatic acid exporter ArAE (TC 2.A.85) family.</text>
</comment>
<protein>
    <recommendedName>
        <fullName evidence="1">p-hydroxybenzoic acid efflux pump subunit AaeB</fullName>
        <shortName evidence="1">pHBA efflux pump protein B</shortName>
    </recommendedName>
</protein>
<proteinExistence type="inferred from homology"/>
<keyword id="KW-0997">Cell inner membrane</keyword>
<keyword id="KW-1003">Cell membrane</keyword>
<keyword id="KW-0472">Membrane</keyword>
<keyword id="KW-1185">Reference proteome</keyword>
<keyword id="KW-0812">Transmembrane</keyword>
<keyword id="KW-1133">Transmembrane helix</keyword>
<keyword id="KW-0813">Transport</keyword>
<organism>
    <name type="scientific">Erwinia billingiae (strain Eb661)</name>
    <dbReference type="NCBI Taxonomy" id="634500"/>
    <lineage>
        <taxon>Bacteria</taxon>
        <taxon>Pseudomonadati</taxon>
        <taxon>Pseudomonadota</taxon>
        <taxon>Gammaproteobacteria</taxon>
        <taxon>Enterobacterales</taxon>
        <taxon>Erwiniaceae</taxon>
        <taxon>Erwinia</taxon>
    </lineage>
</organism>
<name>AAEB_ERWBE</name>
<feature type="chain" id="PRO_0000414003" description="p-hydroxybenzoic acid efflux pump subunit AaeB">
    <location>
        <begin position="1"/>
        <end position="652"/>
    </location>
</feature>
<feature type="transmembrane region" description="Helical" evidence="1">
    <location>
        <begin position="8"/>
        <end position="28"/>
    </location>
</feature>
<feature type="transmembrane region" description="Helical" evidence="1">
    <location>
        <begin position="34"/>
        <end position="54"/>
    </location>
</feature>
<feature type="transmembrane region" description="Helical" evidence="1">
    <location>
        <begin position="64"/>
        <end position="84"/>
    </location>
</feature>
<feature type="transmembrane region" description="Helical" evidence="1">
    <location>
        <begin position="88"/>
        <end position="108"/>
    </location>
</feature>
<feature type="transmembrane region" description="Helical" evidence="1">
    <location>
        <begin position="118"/>
        <end position="138"/>
    </location>
</feature>
<feature type="transmembrane region" description="Helical" evidence="1">
    <location>
        <begin position="149"/>
        <end position="169"/>
    </location>
</feature>
<feature type="transmembrane region" description="Helical" evidence="1">
    <location>
        <begin position="367"/>
        <end position="387"/>
    </location>
</feature>
<feature type="transmembrane region" description="Helical" evidence="1">
    <location>
        <begin position="404"/>
        <end position="424"/>
    </location>
</feature>
<feature type="transmembrane region" description="Helical" evidence="1">
    <location>
        <begin position="429"/>
        <end position="449"/>
    </location>
</feature>
<feature type="transmembrane region" description="Helical" evidence="1">
    <location>
        <begin position="453"/>
        <end position="473"/>
    </location>
</feature>
<feature type="transmembrane region" description="Helical" evidence="1">
    <location>
        <begin position="480"/>
        <end position="500"/>
    </location>
</feature>